<dbReference type="EC" id="3.5.4.19" evidence="1"/>
<dbReference type="EMBL" id="CP000884">
    <property type="protein sequence ID" value="ABX38178.1"/>
    <property type="molecule type" value="Genomic_DNA"/>
</dbReference>
<dbReference type="SMR" id="A9BXA2"/>
<dbReference type="STRING" id="398578.Daci_5549"/>
<dbReference type="KEGG" id="dac:Daci_5549"/>
<dbReference type="eggNOG" id="COG0139">
    <property type="taxonomic scope" value="Bacteria"/>
</dbReference>
<dbReference type="HOGENOM" id="CLU_048577_5_0_4"/>
<dbReference type="UniPathway" id="UPA00031">
    <property type="reaction ID" value="UER00008"/>
</dbReference>
<dbReference type="Proteomes" id="UP000000784">
    <property type="component" value="Chromosome"/>
</dbReference>
<dbReference type="GO" id="GO:0005737">
    <property type="term" value="C:cytoplasm"/>
    <property type="evidence" value="ECO:0007669"/>
    <property type="project" value="UniProtKB-SubCell"/>
</dbReference>
<dbReference type="GO" id="GO:0000287">
    <property type="term" value="F:magnesium ion binding"/>
    <property type="evidence" value="ECO:0007669"/>
    <property type="project" value="UniProtKB-UniRule"/>
</dbReference>
<dbReference type="GO" id="GO:0004635">
    <property type="term" value="F:phosphoribosyl-AMP cyclohydrolase activity"/>
    <property type="evidence" value="ECO:0007669"/>
    <property type="project" value="UniProtKB-UniRule"/>
</dbReference>
<dbReference type="GO" id="GO:0008270">
    <property type="term" value="F:zinc ion binding"/>
    <property type="evidence" value="ECO:0007669"/>
    <property type="project" value="UniProtKB-UniRule"/>
</dbReference>
<dbReference type="GO" id="GO:0000105">
    <property type="term" value="P:L-histidine biosynthetic process"/>
    <property type="evidence" value="ECO:0007669"/>
    <property type="project" value="UniProtKB-UniRule"/>
</dbReference>
<dbReference type="FunFam" id="3.10.20.810:FF:000001">
    <property type="entry name" value="Histidine biosynthesis bifunctional protein HisIE"/>
    <property type="match status" value="1"/>
</dbReference>
<dbReference type="Gene3D" id="3.10.20.810">
    <property type="entry name" value="Phosphoribosyl-AMP cyclohydrolase"/>
    <property type="match status" value="1"/>
</dbReference>
<dbReference type="HAMAP" id="MF_01021">
    <property type="entry name" value="HisI"/>
    <property type="match status" value="1"/>
</dbReference>
<dbReference type="InterPro" id="IPR026660">
    <property type="entry name" value="PRA-CH"/>
</dbReference>
<dbReference type="InterPro" id="IPR002496">
    <property type="entry name" value="PRib_AMP_CycHydrolase_dom"/>
</dbReference>
<dbReference type="InterPro" id="IPR038019">
    <property type="entry name" value="PRib_AMP_CycHydrolase_sf"/>
</dbReference>
<dbReference type="NCBIfam" id="NF000768">
    <property type="entry name" value="PRK00051.1"/>
    <property type="match status" value="1"/>
</dbReference>
<dbReference type="PANTHER" id="PTHR42945">
    <property type="entry name" value="HISTIDINE BIOSYNTHESIS BIFUNCTIONAL PROTEIN"/>
    <property type="match status" value="1"/>
</dbReference>
<dbReference type="PANTHER" id="PTHR42945:SF1">
    <property type="entry name" value="HISTIDINE BIOSYNTHESIS BIFUNCTIONAL PROTEIN HIS7"/>
    <property type="match status" value="1"/>
</dbReference>
<dbReference type="Pfam" id="PF01502">
    <property type="entry name" value="PRA-CH"/>
    <property type="match status" value="1"/>
</dbReference>
<dbReference type="SUPFAM" id="SSF141734">
    <property type="entry name" value="HisI-like"/>
    <property type="match status" value="1"/>
</dbReference>
<feature type="chain" id="PRO_1000135348" description="Phosphoribosyl-AMP cyclohydrolase">
    <location>
        <begin position="1"/>
        <end position="132"/>
    </location>
</feature>
<feature type="binding site" evidence="1">
    <location>
        <position position="79"/>
    </location>
    <ligand>
        <name>Mg(2+)</name>
        <dbReference type="ChEBI" id="CHEBI:18420"/>
    </ligand>
</feature>
<feature type="binding site" evidence="1">
    <location>
        <position position="80"/>
    </location>
    <ligand>
        <name>Zn(2+)</name>
        <dbReference type="ChEBI" id="CHEBI:29105"/>
        <note>ligand shared between dimeric partners</note>
    </ligand>
</feature>
<feature type="binding site" evidence="1">
    <location>
        <position position="81"/>
    </location>
    <ligand>
        <name>Mg(2+)</name>
        <dbReference type="ChEBI" id="CHEBI:18420"/>
    </ligand>
</feature>
<feature type="binding site" evidence="1">
    <location>
        <position position="83"/>
    </location>
    <ligand>
        <name>Mg(2+)</name>
        <dbReference type="ChEBI" id="CHEBI:18420"/>
    </ligand>
</feature>
<feature type="binding site" evidence="1">
    <location>
        <position position="100"/>
    </location>
    <ligand>
        <name>Zn(2+)</name>
        <dbReference type="ChEBI" id="CHEBI:29105"/>
        <note>ligand shared between dimeric partners</note>
    </ligand>
</feature>
<feature type="binding site" evidence="1">
    <location>
        <position position="107"/>
    </location>
    <ligand>
        <name>Zn(2+)</name>
        <dbReference type="ChEBI" id="CHEBI:29105"/>
        <note>ligand shared between dimeric partners</note>
    </ligand>
</feature>
<gene>
    <name evidence="1" type="primary">hisI</name>
    <name type="ordered locus">Daci_5549</name>
</gene>
<organism>
    <name type="scientific">Delftia acidovorans (strain DSM 14801 / SPH-1)</name>
    <dbReference type="NCBI Taxonomy" id="398578"/>
    <lineage>
        <taxon>Bacteria</taxon>
        <taxon>Pseudomonadati</taxon>
        <taxon>Pseudomonadota</taxon>
        <taxon>Betaproteobacteria</taxon>
        <taxon>Burkholderiales</taxon>
        <taxon>Comamonadaceae</taxon>
        <taxon>Delftia</taxon>
    </lineage>
</organism>
<keyword id="KW-0028">Amino-acid biosynthesis</keyword>
<keyword id="KW-0963">Cytoplasm</keyword>
<keyword id="KW-0368">Histidine biosynthesis</keyword>
<keyword id="KW-0378">Hydrolase</keyword>
<keyword id="KW-0460">Magnesium</keyword>
<keyword id="KW-0479">Metal-binding</keyword>
<keyword id="KW-1185">Reference proteome</keyword>
<keyword id="KW-0862">Zinc</keyword>
<evidence type="ECO:0000255" key="1">
    <source>
        <dbReference type="HAMAP-Rule" id="MF_01021"/>
    </source>
</evidence>
<name>HIS3_DELAS</name>
<reference key="1">
    <citation type="submission" date="2007-11" db="EMBL/GenBank/DDBJ databases">
        <title>Complete sequence of Delftia acidovorans DSM 14801 / SPH-1.</title>
        <authorList>
            <person name="Copeland A."/>
            <person name="Lucas S."/>
            <person name="Lapidus A."/>
            <person name="Barry K."/>
            <person name="Glavina del Rio T."/>
            <person name="Dalin E."/>
            <person name="Tice H."/>
            <person name="Pitluck S."/>
            <person name="Lowry S."/>
            <person name="Clum A."/>
            <person name="Schmutz J."/>
            <person name="Larimer F."/>
            <person name="Land M."/>
            <person name="Hauser L."/>
            <person name="Kyrpides N."/>
            <person name="Kim E."/>
            <person name="Schleheck D."/>
            <person name="Richardson P."/>
        </authorList>
    </citation>
    <scope>NUCLEOTIDE SEQUENCE [LARGE SCALE GENOMIC DNA]</scope>
    <source>
        <strain>DSM 14801 / SPH-1</strain>
    </source>
</reference>
<proteinExistence type="inferred from homology"/>
<protein>
    <recommendedName>
        <fullName evidence="1">Phosphoribosyl-AMP cyclohydrolase</fullName>
        <shortName evidence="1">PRA-CH</shortName>
        <ecNumber evidence="1">3.5.4.19</ecNumber>
    </recommendedName>
</protein>
<comment type="function">
    <text evidence="1">Catalyzes the hydrolysis of the adenine ring of phosphoribosyl-AMP.</text>
</comment>
<comment type="catalytic activity">
    <reaction evidence="1">
        <text>1-(5-phospho-beta-D-ribosyl)-5'-AMP + H2O = 1-(5-phospho-beta-D-ribosyl)-5-[(5-phospho-beta-D-ribosylamino)methylideneamino]imidazole-4-carboxamide</text>
        <dbReference type="Rhea" id="RHEA:20049"/>
        <dbReference type="ChEBI" id="CHEBI:15377"/>
        <dbReference type="ChEBI" id="CHEBI:58435"/>
        <dbReference type="ChEBI" id="CHEBI:59457"/>
        <dbReference type="EC" id="3.5.4.19"/>
    </reaction>
</comment>
<comment type="cofactor">
    <cofactor evidence="1">
        <name>Mg(2+)</name>
        <dbReference type="ChEBI" id="CHEBI:18420"/>
    </cofactor>
    <text evidence="1">Binds 1 Mg(2+) ion per subunit.</text>
</comment>
<comment type="cofactor">
    <cofactor evidence="1">
        <name>Zn(2+)</name>
        <dbReference type="ChEBI" id="CHEBI:29105"/>
    </cofactor>
    <text evidence="1">Binds 1 zinc ion per subunit.</text>
</comment>
<comment type="pathway">
    <text evidence="1">Amino-acid biosynthesis; L-histidine biosynthesis; L-histidine from 5-phospho-alpha-D-ribose 1-diphosphate: step 3/9.</text>
</comment>
<comment type="subunit">
    <text evidence="1">Homodimer.</text>
</comment>
<comment type="subcellular location">
    <subcellularLocation>
        <location evidence="1">Cytoplasm</location>
    </subcellularLocation>
</comment>
<comment type="similarity">
    <text evidence="1">Belongs to the PRA-CH family.</text>
</comment>
<accession>A9BXA2</accession>
<sequence length="132" mass="15077">MQAMNWLDQVKWDAQGLVPVIAQEKDTGDVMMFAWMNREALAKTAELGRAVYFSRSRNKLWFKGEESGHVQTVHEVRIDCDNDVVLLKITQTGHEPGIACHTGRHSCFYSVLRDGQWQAVDPVLKDPESIYK</sequence>